<name>RL30_FRACC</name>
<gene>
    <name evidence="1" type="primary">rpmD</name>
    <name type="ordered locus">Francci3_0600</name>
</gene>
<organism>
    <name type="scientific">Frankia casuarinae (strain DSM 45818 / CECT 9043 / HFP020203 / CcI3)</name>
    <dbReference type="NCBI Taxonomy" id="106370"/>
    <lineage>
        <taxon>Bacteria</taxon>
        <taxon>Bacillati</taxon>
        <taxon>Actinomycetota</taxon>
        <taxon>Actinomycetes</taxon>
        <taxon>Frankiales</taxon>
        <taxon>Frankiaceae</taxon>
        <taxon>Frankia</taxon>
    </lineage>
</organism>
<keyword id="KW-1185">Reference proteome</keyword>
<keyword id="KW-0687">Ribonucleoprotein</keyword>
<keyword id="KW-0689">Ribosomal protein</keyword>
<evidence type="ECO:0000255" key="1">
    <source>
        <dbReference type="HAMAP-Rule" id="MF_01371"/>
    </source>
</evidence>
<evidence type="ECO:0000305" key="2"/>
<proteinExistence type="inferred from homology"/>
<reference key="1">
    <citation type="journal article" date="2007" name="Genome Res.">
        <title>Genome characteristics of facultatively symbiotic Frankia sp. strains reflect host range and host plant biogeography.</title>
        <authorList>
            <person name="Normand P."/>
            <person name="Lapierre P."/>
            <person name="Tisa L.S."/>
            <person name="Gogarten J.P."/>
            <person name="Alloisio N."/>
            <person name="Bagnarol E."/>
            <person name="Bassi C.A."/>
            <person name="Berry A.M."/>
            <person name="Bickhart D.M."/>
            <person name="Choisne N."/>
            <person name="Couloux A."/>
            <person name="Cournoyer B."/>
            <person name="Cruveiller S."/>
            <person name="Daubin V."/>
            <person name="Demange N."/>
            <person name="Francino M.P."/>
            <person name="Goltsman E."/>
            <person name="Huang Y."/>
            <person name="Kopp O.R."/>
            <person name="Labarre L."/>
            <person name="Lapidus A."/>
            <person name="Lavire C."/>
            <person name="Marechal J."/>
            <person name="Martinez M."/>
            <person name="Mastronunzio J.E."/>
            <person name="Mullin B.C."/>
            <person name="Niemann J."/>
            <person name="Pujic P."/>
            <person name="Rawnsley T."/>
            <person name="Rouy Z."/>
            <person name="Schenowitz C."/>
            <person name="Sellstedt A."/>
            <person name="Tavares F."/>
            <person name="Tomkins J.P."/>
            <person name="Vallenet D."/>
            <person name="Valverde C."/>
            <person name="Wall L.G."/>
            <person name="Wang Y."/>
            <person name="Medigue C."/>
            <person name="Benson D.R."/>
        </authorList>
    </citation>
    <scope>NUCLEOTIDE SEQUENCE [LARGE SCALE GENOMIC DNA]</scope>
    <source>
        <strain>DSM 45818 / CECT 9043 / HFP020203 / CcI3</strain>
    </source>
</reference>
<dbReference type="EMBL" id="CP000249">
    <property type="protein sequence ID" value="ABD09984.1"/>
    <property type="molecule type" value="Genomic_DNA"/>
</dbReference>
<dbReference type="RefSeq" id="WP_011435055.1">
    <property type="nucleotide sequence ID" value="NZ_LRTJ01000013.1"/>
</dbReference>
<dbReference type="SMR" id="Q2JFF8"/>
<dbReference type="STRING" id="106370.Francci3_0600"/>
<dbReference type="KEGG" id="fra:Francci3_0600"/>
<dbReference type="eggNOG" id="COG1841">
    <property type="taxonomic scope" value="Bacteria"/>
</dbReference>
<dbReference type="HOGENOM" id="CLU_131047_2_1_11"/>
<dbReference type="OrthoDB" id="9812790at2"/>
<dbReference type="PhylomeDB" id="Q2JFF8"/>
<dbReference type="Proteomes" id="UP000001937">
    <property type="component" value="Chromosome"/>
</dbReference>
<dbReference type="GO" id="GO:0022625">
    <property type="term" value="C:cytosolic large ribosomal subunit"/>
    <property type="evidence" value="ECO:0007669"/>
    <property type="project" value="TreeGrafter"/>
</dbReference>
<dbReference type="GO" id="GO:0003735">
    <property type="term" value="F:structural constituent of ribosome"/>
    <property type="evidence" value="ECO:0007669"/>
    <property type="project" value="InterPro"/>
</dbReference>
<dbReference type="GO" id="GO:0006412">
    <property type="term" value="P:translation"/>
    <property type="evidence" value="ECO:0007669"/>
    <property type="project" value="UniProtKB-UniRule"/>
</dbReference>
<dbReference type="CDD" id="cd01658">
    <property type="entry name" value="Ribosomal_L30"/>
    <property type="match status" value="1"/>
</dbReference>
<dbReference type="FunFam" id="3.30.1390.20:FF:000001">
    <property type="entry name" value="50S ribosomal protein L30"/>
    <property type="match status" value="1"/>
</dbReference>
<dbReference type="Gene3D" id="3.30.1390.20">
    <property type="entry name" value="Ribosomal protein L30, ferredoxin-like fold domain"/>
    <property type="match status" value="1"/>
</dbReference>
<dbReference type="HAMAP" id="MF_01371_B">
    <property type="entry name" value="Ribosomal_uL30_B"/>
    <property type="match status" value="1"/>
</dbReference>
<dbReference type="InterPro" id="IPR036919">
    <property type="entry name" value="Ribo_uL30_ferredoxin-like_sf"/>
</dbReference>
<dbReference type="InterPro" id="IPR005996">
    <property type="entry name" value="Ribosomal_uL30_bac-type"/>
</dbReference>
<dbReference type="InterPro" id="IPR016082">
    <property type="entry name" value="Ribosomal_uL30_ferredoxin-like"/>
</dbReference>
<dbReference type="NCBIfam" id="TIGR01308">
    <property type="entry name" value="rpmD_bact"/>
    <property type="match status" value="1"/>
</dbReference>
<dbReference type="PANTHER" id="PTHR15892:SF2">
    <property type="entry name" value="LARGE RIBOSOMAL SUBUNIT PROTEIN UL30M"/>
    <property type="match status" value="1"/>
</dbReference>
<dbReference type="PANTHER" id="PTHR15892">
    <property type="entry name" value="MITOCHONDRIAL RIBOSOMAL PROTEIN L30"/>
    <property type="match status" value="1"/>
</dbReference>
<dbReference type="Pfam" id="PF00327">
    <property type="entry name" value="Ribosomal_L30"/>
    <property type="match status" value="1"/>
</dbReference>
<dbReference type="PIRSF" id="PIRSF002211">
    <property type="entry name" value="Ribosomal_L30_bac-type"/>
    <property type="match status" value="1"/>
</dbReference>
<dbReference type="SUPFAM" id="SSF55129">
    <property type="entry name" value="Ribosomal protein L30p/L7e"/>
    <property type="match status" value="1"/>
</dbReference>
<accession>Q2JFF8</accession>
<protein>
    <recommendedName>
        <fullName evidence="1">Large ribosomal subunit protein uL30</fullName>
    </recommendedName>
    <alternativeName>
        <fullName evidence="2">50S ribosomal protein L30</fullName>
    </alternativeName>
</protein>
<comment type="subunit">
    <text evidence="1">Part of the 50S ribosomal subunit.</text>
</comment>
<comment type="similarity">
    <text evidence="1">Belongs to the universal ribosomal protein uL30 family.</text>
</comment>
<feature type="chain" id="PRO_0000273791" description="Large ribosomal subunit protein uL30">
    <location>
        <begin position="1"/>
        <end position="61"/>
    </location>
</feature>
<sequence length="61" mass="6859">MAKLRITQIRSGIGGTSNQRATLRTLGLRKINATTVRDDRPEIRGMIRTVTHLVRVEEVDS</sequence>